<gene>
    <name evidence="1" type="primary">cofD</name>
    <name type="ordered locus">Mevan_1392</name>
</gene>
<feature type="chain" id="PRO_1000067248" description="2-phospho-L-lactate transferase">
    <location>
        <begin position="1"/>
        <end position="312"/>
    </location>
</feature>
<feature type="binding site" evidence="1">
    <location>
        <position position="50"/>
    </location>
    <ligand>
        <name>7,8-didemethyl-8-hydroxy-5-deazariboflavin</name>
        <dbReference type="ChEBI" id="CHEBI:59904"/>
    </ligand>
</feature>
<feature type="binding site" evidence="1">
    <location>
        <position position="89"/>
    </location>
    <ligand>
        <name>7,8-didemethyl-8-hydroxy-5-deazariboflavin</name>
        <dbReference type="ChEBI" id="CHEBI:59904"/>
    </ligand>
</feature>
<name>COFD_METVS</name>
<sequence length="312" mass="35024">MKITILSGGTGTPKLIQGFKKIIPNKDISVIVNTGEDTYIGDLYLSPDIDTVIYTFSDIINDETWYGLKEDTFFCHEQLKNYGFNEVLKIGDRDRALKMHKTALLKKGIPLSEIVELEKSSLNITSKIYPMSNDLVQSKILIEENGEKLLLKFHDFWIFRKGNANVLDVFYENSNYAKPADGVLRAIEESDFVVIGPSNPITSIGPILSIKEIKEALKEKIVFAVSPIIGENPVSGPTGTLMSAKGYSVDVTGIYGYYKDIVNVMVIDSKDINKKKEIECDVLCIDTIMKTIEDKVNLSKNIVEYYKSKCTY</sequence>
<dbReference type="EC" id="2.7.8.28" evidence="1"/>
<dbReference type="EMBL" id="CP000742">
    <property type="protein sequence ID" value="ABR55289.1"/>
    <property type="molecule type" value="Genomic_DNA"/>
</dbReference>
<dbReference type="RefSeq" id="WP_012066203.1">
    <property type="nucleotide sequence ID" value="NC_009634.1"/>
</dbReference>
<dbReference type="SMR" id="A6US17"/>
<dbReference type="STRING" id="406327.Mevan_1392"/>
<dbReference type="GeneID" id="5324815"/>
<dbReference type="KEGG" id="mvn:Mevan_1392"/>
<dbReference type="eggNOG" id="arCOG04395">
    <property type="taxonomic scope" value="Archaea"/>
</dbReference>
<dbReference type="HOGENOM" id="CLU_055795_1_0_2"/>
<dbReference type="OrthoDB" id="59563at2157"/>
<dbReference type="UniPathway" id="UPA00071"/>
<dbReference type="Proteomes" id="UP000001107">
    <property type="component" value="Chromosome"/>
</dbReference>
<dbReference type="GO" id="GO:0043743">
    <property type="term" value="F:LPPG:FO 2-phospho-L-lactate transferase activity"/>
    <property type="evidence" value="ECO:0007669"/>
    <property type="project" value="UniProtKB-EC"/>
</dbReference>
<dbReference type="GO" id="GO:0000287">
    <property type="term" value="F:magnesium ion binding"/>
    <property type="evidence" value="ECO:0007669"/>
    <property type="project" value="InterPro"/>
</dbReference>
<dbReference type="GO" id="GO:0052645">
    <property type="term" value="P:F420-0 metabolic process"/>
    <property type="evidence" value="ECO:0007669"/>
    <property type="project" value="UniProtKB-UniRule"/>
</dbReference>
<dbReference type="CDD" id="cd07186">
    <property type="entry name" value="CofD_like"/>
    <property type="match status" value="1"/>
</dbReference>
<dbReference type="Gene3D" id="1.10.8.240">
    <property type="entry name" value="CofD-like domain"/>
    <property type="match status" value="1"/>
</dbReference>
<dbReference type="Gene3D" id="3.40.50.10680">
    <property type="entry name" value="CofD-like domains"/>
    <property type="match status" value="1"/>
</dbReference>
<dbReference type="HAMAP" id="MF_01257">
    <property type="entry name" value="CofD"/>
    <property type="match status" value="1"/>
</dbReference>
<dbReference type="InterPro" id="IPR002882">
    <property type="entry name" value="CofD"/>
</dbReference>
<dbReference type="InterPro" id="IPR038136">
    <property type="entry name" value="CofD-like_dom_sf"/>
</dbReference>
<dbReference type="InterPro" id="IPR010115">
    <property type="entry name" value="FbiA/CofD"/>
</dbReference>
<dbReference type="NCBIfam" id="TIGR01819">
    <property type="entry name" value="F420_cofD"/>
    <property type="match status" value="1"/>
</dbReference>
<dbReference type="PANTHER" id="PTHR43007">
    <property type="entry name" value="2-PHOSPHO-L-LACTATE TRANSFERASE"/>
    <property type="match status" value="1"/>
</dbReference>
<dbReference type="PANTHER" id="PTHR43007:SF1">
    <property type="entry name" value="2-PHOSPHO-L-LACTATE TRANSFERASE"/>
    <property type="match status" value="1"/>
</dbReference>
<dbReference type="Pfam" id="PF01933">
    <property type="entry name" value="CofD"/>
    <property type="match status" value="1"/>
</dbReference>
<dbReference type="SUPFAM" id="SSF142338">
    <property type="entry name" value="CofD-like"/>
    <property type="match status" value="1"/>
</dbReference>
<protein>
    <recommendedName>
        <fullName evidence="1">2-phospho-L-lactate transferase</fullName>
        <ecNumber evidence="1">2.7.8.28</ecNumber>
    </recommendedName>
</protein>
<proteinExistence type="inferred from homology"/>
<accession>A6US17</accession>
<organism>
    <name type="scientific">Methanococcus vannielii (strain ATCC 35089 / DSM 1224 / JCM 13029 / OCM 148 / SB)</name>
    <dbReference type="NCBI Taxonomy" id="406327"/>
    <lineage>
        <taxon>Archaea</taxon>
        <taxon>Methanobacteriati</taxon>
        <taxon>Methanobacteriota</taxon>
        <taxon>Methanomada group</taxon>
        <taxon>Methanococci</taxon>
        <taxon>Methanococcales</taxon>
        <taxon>Methanococcaceae</taxon>
        <taxon>Methanococcus</taxon>
    </lineage>
</organism>
<reference key="1">
    <citation type="submission" date="2007-06" db="EMBL/GenBank/DDBJ databases">
        <title>Complete sequence of Methanococcus vannielii SB.</title>
        <authorList>
            <consortium name="US DOE Joint Genome Institute"/>
            <person name="Copeland A."/>
            <person name="Lucas S."/>
            <person name="Lapidus A."/>
            <person name="Barry K."/>
            <person name="Glavina del Rio T."/>
            <person name="Dalin E."/>
            <person name="Tice H."/>
            <person name="Pitluck S."/>
            <person name="Chain P."/>
            <person name="Malfatti S."/>
            <person name="Shin M."/>
            <person name="Vergez L."/>
            <person name="Schmutz J."/>
            <person name="Larimer F."/>
            <person name="Land M."/>
            <person name="Hauser L."/>
            <person name="Kyrpides N."/>
            <person name="Anderson I."/>
            <person name="Sieprawska-Lupa M."/>
            <person name="Whitman W.B."/>
            <person name="Richardson P."/>
        </authorList>
    </citation>
    <scope>NUCLEOTIDE SEQUENCE [LARGE SCALE GENOMIC DNA]</scope>
    <source>
        <strain>ATCC 35089 / DSM 1224 / JCM 13029 / OCM 148 / SB</strain>
    </source>
</reference>
<keyword id="KW-0460">Magnesium</keyword>
<keyword id="KW-0808">Transferase</keyword>
<evidence type="ECO:0000255" key="1">
    <source>
        <dbReference type="HAMAP-Rule" id="MF_01257"/>
    </source>
</evidence>
<comment type="function">
    <text evidence="1">Catalyzes the transfer of the 2-phospholactate moiety from (2S)-lactyl-2-diphospho-5'-guanosine to 7,8-didemethyl-8-hydroxy-5-deazariboflavin (FO) with the formation of oxidized coenzyme F420-0 and GMP.</text>
</comment>
<comment type="catalytic activity">
    <reaction evidence="1">
        <text>(2S)-lactyl-2-diphospho-5'-guanosine + 7,8-didemethyl-8-hydroxy-5-deazariboflavin = oxidized coenzyme F420-0 + GMP + H(+)</text>
        <dbReference type="Rhea" id="RHEA:63444"/>
        <dbReference type="ChEBI" id="CHEBI:15378"/>
        <dbReference type="ChEBI" id="CHEBI:58115"/>
        <dbReference type="ChEBI" id="CHEBI:59435"/>
        <dbReference type="ChEBI" id="CHEBI:59904"/>
        <dbReference type="ChEBI" id="CHEBI:59907"/>
        <dbReference type="EC" id="2.7.8.28"/>
    </reaction>
</comment>
<comment type="cofactor">
    <cofactor evidence="1">
        <name>Mg(2+)</name>
        <dbReference type="ChEBI" id="CHEBI:18420"/>
    </cofactor>
</comment>
<comment type="pathway">
    <text evidence="1">Cofactor biosynthesis; coenzyme F420 biosynthesis.</text>
</comment>
<comment type="subunit">
    <text evidence="1">Homodimer.</text>
</comment>
<comment type="similarity">
    <text evidence="1">Belongs to the CofD family.</text>
</comment>